<comment type="subcellular location">
    <subcellularLocation>
        <location evidence="4">Secreted</location>
    </subcellularLocation>
</comment>
<comment type="tissue specificity">
    <text>Highly expressed in cochlea.</text>
</comment>
<comment type="similarity">
    <text evidence="4">Belongs to the MIA/OTOR family.</text>
</comment>
<keyword id="KW-1015">Disulfide bond</keyword>
<keyword id="KW-1185">Reference proteome</keyword>
<keyword id="KW-0964">Secreted</keyword>
<keyword id="KW-0728">SH3 domain</keyword>
<keyword id="KW-0732">Signal</keyword>
<dbReference type="EMBL" id="AF233518">
    <property type="protein sequence ID" value="AAF82727.1"/>
    <property type="molecule type" value="mRNA"/>
</dbReference>
<dbReference type="RefSeq" id="NP_990063.1">
    <property type="nucleotide sequence ID" value="NM_204732.1"/>
</dbReference>
<dbReference type="SMR" id="Q9I8P6"/>
<dbReference type="STRING" id="9031.ENSGALP00000014195"/>
<dbReference type="PaxDb" id="9031-ENSGALP00000014195"/>
<dbReference type="Ensembl" id="ENSGALT00010046607.1">
    <property type="protein sequence ID" value="ENSGALP00010027758.1"/>
    <property type="gene ID" value="ENSGALG00010019275.1"/>
</dbReference>
<dbReference type="GeneID" id="395484"/>
<dbReference type="KEGG" id="gga:395484"/>
<dbReference type="CTD" id="64693"/>
<dbReference type="VEuPathDB" id="HostDB:geneid_395484"/>
<dbReference type="eggNOG" id="ENOG502S18Q">
    <property type="taxonomic scope" value="Eukaryota"/>
</dbReference>
<dbReference type="GeneTree" id="ENSGT00950000182767"/>
<dbReference type="HOGENOM" id="CLU_158739_0_1_1"/>
<dbReference type="InParanoid" id="Q9I8P6"/>
<dbReference type="OMA" id="LCADDDC"/>
<dbReference type="OrthoDB" id="6627676at2759"/>
<dbReference type="PhylomeDB" id="Q9I8P6"/>
<dbReference type="TreeFam" id="TF332724"/>
<dbReference type="PRO" id="PR:Q9I8P6"/>
<dbReference type="Proteomes" id="UP000000539">
    <property type="component" value="Chromosome 3"/>
</dbReference>
<dbReference type="Bgee" id="ENSGALG00000008732">
    <property type="expression patterns" value="Expressed in skeletal muscle tissue and 5 other cell types or tissues"/>
</dbReference>
<dbReference type="GO" id="GO:0005576">
    <property type="term" value="C:extracellular region"/>
    <property type="evidence" value="ECO:0007669"/>
    <property type="project" value="UniProtKB-SubCell"/>
</dbReference>
<dbReference type="GO" id="GO:0001502">
    <property type="term" value="P:cartilage condensation"/>
    <property type="evidence" value="ECO:0000318"/>
    <property type="project" value="GO_Central"/>
</dbReference>
<dbReference type="CDD" id="cd11891">
    <property type="entry name" value="MIAL"/>
    <property type="match status" value="1"/>
</dbReference>
<dbReference type="Gene3D" id="2.30.30.40">
    <property type="entry name" value="SH3 Domains"/>
    <property type="match status" value="1"/>
</dbReference>
<dbReference type="InterPro" id="IPR042801">
    <property type="entry name" value="OTOR"/>
</dbReference>
<dbReference type="InterPro" id="IPR035554">
    <property type="entry name" value="Otoraplin_SH3"/>
</dbReference>
<dbReference type="InterPro" id="IPR036028">
    <property type="entry name" value="SH3-like_dom_sf"/>
</dbReference>
<dbReference type="InterPro" id="IPR001452">
    <property type="entry name" value="SH3_domain"/>
</dbReference>
<dbReference type="PANTHER" id="PTHR47146">
    <property type="entry name" value="OTORAPLIN"/>
    <property type="match status" value="1"/>
</dbReference>
<dbReference type="PANTHER" id="PTHR47146:SF1">
    <property type="entry name" value="OTORAPLIN"/>
    <property type="match status" value="1"/>
</dbReference>
<dbReference type="Pfam" id="PF07653">
    <property type="entry name" value="SH3_2"/>
    <property type="match status" value="1"/>
</dbReference>
<dbReference type="SMART" id="SM00326">
    <property type="entry name" value="SH3"/>
    <property type="match status" value="1"/>
</dbReference>
<dbReference type="SUPFAM" id="SSF50044">
    <property type="entry name" value="SH3-domain"/>
    <property type="match status" value="1"/>
</dbReference>
<dbReference type="PROSITE" id="PS50002">
    <property type="entry name" value="SH3"/>
    <property type="match status" value="1"/>
</dbReference>
<accession>Q9I8P6</accession>
<proteinExistence type="evidence at transcript level"/>
<reference key="1">
    <citation type="journal article" date="2000" name="Genomics">
        <title>A novel conserved cochlear gene, OTOR: identification, expression analysis, and chromosomal mapping.</title>
        <authorList>
            <person name="Robertson N.G."/>
            <person name="Heller S."/>
            <person name="Lin J.S."/>
            <person name="Resendes B.L."/>
            <person name="Weremowicz S."/>
            <person name="Denis C.S."/>
            <person name="Bell A.M."/>
            <person name="Hudspeth A.J."/>
            <person name="Morton C.C."/>
        </authorList>
    </citation>
    <scope>NUCLEOTIDE SEQUENCE [MRNA]</scope>
</reference>
<evidence type="ECO:0000250" key="1"/>
<evidence type="ECO:0000255" key="2"/>
<evidence type="ECO:0000255" key="3">
    <source>
        <dbReference type="PROSITE-ProRule" id="PRU00192"/>
    </source>
</evidence>
<evidence type="ECO:0000305" key="4"/>
<name>OTOR_CHICK</name>
<protein>
    <recommendedName>
        <fullName>Otoraplin</fullName>
    </recommendedName>
</protein>
<organism>
    <name type="scientific">Gallus gallus</name>
    <name type="common">Chicken</name>
    <dbReference type="NCBI Taxonomy" id="9031"/>
    <lineage>
        <taxon>Eukaryota</taxon>
        <taxon>Metazoa</taxon>
        <taxon>Chordata</taxon>
        <taxon>Craniata</taxon>
        <taxon>Vertebrata</taxon>
        <taxon>Euteleostomi</taxon>
        <taxon>Archelosauria</taxon>
        <taxon>Archosauria</taxon>
        <taxon>Dinosauria</taxon>
        <taxon>Saurischia</taxon>
        <taxon>Theropoda</taxon>
        <taxon>Coelurosauria</taxon>
        <taxon>Aves</taxon>
        <taxon>Neognathae</taxon>
        <taxon>Galloanserae</taxon>
        <taxon>Galliformes</taxon>
        <taxon>Phasianidae</taxon>
        <taxon>Phasianinae</taxon>
        <taxon>Gallus</taxon>
    </lineage>
</organism>
<feature type="signal peptide" evidence="2">
    <location>
        <begin position="1"/>
        <end position="23"/>
    </location>
</feature>
<feature type="chain" id="PRO_0000019035" description="Otoraplin">
    <location>
        <begin position="24"/>
        <end position="132"/>
    </location>
</feature>
<feature type="domain" description="SH3" evidence="3">
    <location>
        <begin position="42"/>
        <end position="114"/>
    </location>
</feature>
<feature type="disulfide bond" evidence="1">
    <location>
        <begin position="35"/>
        <end position="40"/>
    </location>
</feature>
<feature type="disulfide bond" evidence="1">
    <location>
        <begin position="58"/>
        <end position="131"/>
    </location>
</feature>
<sequence length="132" mass="15177">MTQRVYSIVLFLCFGLMNPFATGIFMDKLASKKLCADDDCVYTISLVRAEEDYNAPDCRFINIKKGQLIYVYSKLVKEKESGEFWAGSVYGEEYEDHMGTVGYFPRSLVSEQHVYQEANKTIPTTDIDFFCE</sequence>
<gene>
    <name type="primary">OTOR</name>
</gene>